<protein>
    <recommendedName>
        <fullName evidence="5">(-)-beta-phellandrene synthase 2, chloroplastic</fullName>
        <ecNumber evidence="4">4.2.3.52</ecNumber>
    </recommendedName>
    <alternativeName>
        <fullName evidence="5">Terpene synthase (-)betaphell2</fullName>
        <shortName evidence="5">PcTPS-(-)betaphell2</shortName>
    </alternativeName>
</protein>
<proteinExistence type="evidence at protein level"/>
<reference key="1">
    <citation type="journal article" date="2013" name="BMC Plant Biol.">
        <title>Transcriptome resources and functional characterization of monoterpene synthases for two host species of the mountain pine beetle, lodgepole pine (Pinus contorta) and jack pine (Pinus banksiana).</title>
        <authorList>
            <person name="Hall D.E."/>
            <person name="Yuen M.M.S."/>
            <person name="Jancsik S."/>
            <person name="Quesada A.L."/>
            <person name="Dullat H.K."/>
            <person name="Li M."/>
            <person name="Henderson H."/>
            <person name="Arango-Velez A."/>
            <person name="Liao N.Y."/>
            <person name="Docking R.T."/>
            <person name="Chan S.K."/>
            <person name="Cooke J.E.K."/>
            <person name="Breuil C."/>
            <person name="Jones S.J.M."/>
            <person name="Keeling C.I."/>
            <person name="Bohlmann J."/>
        </authorList>
    </citation>
    <scope>NUCLEOTIDE SEQUENCE [MRNA]</scope>
    <scope>FUNCTION</scope>
    <scope>CATALYTIC ACTIVITY</scope>
    <scope>PATHWAY</scope>
</reference>
<gene>
    <name evidence="5" type="primary">TPS-(-)Bphell2</name>
</gene>
<keyword id="KW-0150">Chloroplast</keyword>
<keyword id="KW-0456">Lyase</keyword>
<keyword id="KW-0460">Magnesium</keyword>
<keyword id="KW-0479">Metal-binding</keyword>
<keyword id="KW-0934">Plastid</keyword>
<keyword id="KW-0809">Transit peptide</keyword>
<comment type="function">
    <text evidence="4">Monoterpene synthase (TPS) involved in the biosynthesis of monoterpene natural products included in conifer oleoresin secretions and volatile emissions; these compounds contribute to biotic and abiotic stress defense against herbivores and pathogens (PubMed:23679205). Catalyzes the conversion of (2E)-geranyl diphosphate (GPP) to (-)-beta-phellandrene (PubMed:23679205).</text>
</comment>
<comment type="catalytic activity">
    <reaction evidence="4">
        <text>(2E)-geranyl diphosphate = (-)-beta-phellandrene + diphosphate</text>
        <dbReference type="Rhea" id="RHEA:25492"/>
        <dbReference type="ChEBI" id="CHEBI:129"/>
        <dbReference type="ChEBI" id="CHEBI:33019"/>
        <dbReference type="ChEBI" id="CHEBI:58057"/>
        <dbReference type="EC" id="4.2.3.52"/>
    </reaction>
    <physiologicalReaction direction="left-to-right" evidence="4">
        <dbReference type="Rhea" id="RHEA:25493"/>
    </physiologicalReaction>
</comment>
<comment type="cofactor">
    <cofactor evidence="1">
        <name>Mg(2+)</name>
        <dbReference type="ChEBI" id="CHEBI:18420"/>
    </cofactor>
    <cofactor evidence="1">
        <name>Mn(2+)</name>
        <dbReference type="ChEBI" id="CHEBI:29035"/>
    </cofactor>
    <text evidence="1">Binds 3 Mg(2+) or Mn(2+) ions per subunit.</text>
</comment>
<comment type="pathway">
    <text evidence="4">Terpene metabolism; oleoresin biosynthesis.</text>
</comment>
<comment type="pathway">
    <text evidence="4">Secondary metabolite biosynthesis; terpenoid biosynthesis.</text>
</comment>
<comment type="subcellular location">
    <subcellularLocation>
        <location evidence="3">Plastid</location>
        <location evidence="3">Chloroplast</location>
    </subcellularLocation>
</comment>
<comment type="domain">
    <text evidence="6">The Asp-Asp-Xaa-Xaa-Asp/Glu (DDXXD/E) motif is important for the catalytic activity, presumably through binding to Mg(2+).</text>
</comment>
<comment type="similarity">
    <text evidence="6">Belongs to the terpene synthase family. Tpsd subfamily.</text>
</comment>
<feature type="transit peptide" description="Chloroplast" evidence="3">
    <location>
        <begin position="1"/>
        <end position="47"/>
    </location>
</feature>
<feature type="chain" id="PRO_0000455016" description="(-)-beta-phellandrene synthase 2, chloroplastic">
    <location>
        <begin position="48"/>
        <end position="624"/>
    </location>
</feature>
<feature type="short sequence motif" description="DDXXD motif" evidence="6">
    <location>
        <begin position="375"/>
        <end position="379"/>
    </location>
</feature>
<feature type="binding site" evidence="2">
    <location>
        <position position="375"/>
    </location>
    <ligand>
        <name>Mg(2+)</name>
        <dbReference type="ChEBI" id="CHEBI:18420"/>
        <label>1</label>
    </ligand>
</feature>
<feature type="binding site" evidence="2">
    <location>
        <position position="375"/>
    </location>
    <ligand>
        <name>Mg(2+)</name>
        <dbReference type="ChEBI" id="CHEBI:18420"/>
        <label>2</label>
    </ligand>
</feature>
<feature type="binding site" evidence="2">
    <location>
        <position position="379"/>
    </location>
    <ligand>
        <name>Mg(2+)</name>
        <dbReference type="ChEBI" id="CHEBI:18420"/>
        <label>1</label>
    </ligand>
</feature>
<feature type="binding site" evidence="2">
    <location>
        <position position="379"/>
    </location>
    <ligand>
        <name>Mg(2+)</name>
        <dbReference type="ChEBI" id="CHEBI:18420"/>
        <label>2</label>
    </ligand>
</feature>
<feature type="binding site" evidence="2">
    <location>
        <position position="527"/>
    </location>
    <ligand>
        <name>Mg(2+)</name>
        <dbReference type="ChEBI" id="CHEBI:18420"/>
        <label>3</label>
    </ligand>
</feature>
<dbReference type="EC" id="4.2.3.52" evidence="4"/>
<dbReference type="EMBL" id="JQ240300">
    <property type="protein sequence ID" value="AFU73852.1"/>
    <property type="molecule type" value="mRNA"/>
</dbReference>
<dbReference type="SMR" id="R9QMW3"/>
<dbReference type="UniPathway" id="UPA00213"/>
<dbReference type="UniPathway" id="UPA00924"/>
<dbReference type="GO" id="GO:0009507">
    <property type="term" value="C:chloroplast"/>
    <property type="evidence" value="ECO:0007669"/>
    <property type="project" value="UniProtKB-SubCell"/>
</dbReference>
<dbReference type="GO" id="GO:0000287">
    <property type="term" value="F:magnesium ion binding"/>
    <property type="evidence" value="ECO:0007669"/>
    <property type="project" value="InterPro"/>
</dbReference>
<dbReference type="GO" id="GO:0010333">
    <property type="term" value="F:terpene synthase activity"/>
    <property type="evidence" value="ECO:0000314"/>
    <property type="project" value="UniProtKB"/>
</dbReference>
<dbReference type="GO" id="GO:0016102">
    <property type="term" value="P:diterpenoid biosynthetic process"/>
    <property type="evidence" value="ECO:0007669"/>
    <property type="project" value="InterPro"/>
</dbReference>
<dbReference type="GO" id="GO:0010597">
    <property type="term" value="P:green leaf volatile biosynthetic process"/>
    <property type="evidence" value="ECO:0000314"/>
    <property type="project" value="UniProtKB"/>
</dbReference>
<dbReference type="GO" id="GO:0016114">
    <property type="term" value="P:terpenoid biosynthetic process"/>
    <property type="evidence" value="ECO:0000314"/>
    <property type="project" value="UniProtKB"/>
</dbReference>
<dbReference type="CDD" id="cd00684">
    <property type="entry name" value="Terpene_cyclase_plant_C1"/>
    <property type="match status" value="1"/>
</dbReference>
<dbReference type="FunFam" id="1.50.10.130:FF:000002">
    <property type="entry name" value="Ent-copalyl diphosphate synthase, chloroplastic"/>
    <property type="match status" value="1"/>
</dbReference>
<dbReference type="FunFam" id="1.10.600.10:FF:000005">
    <property type="entry name" value="Ent-kaur-16-ene synthase, chloroplastic"/>
    <property type="match status" value="1"/>
</dbReference>
<dbReference type="Gene3D" id="1.10.600.10">
    <property type="entry name" value="Farnesyl Diphosphate Synthase"/>
    <property type="match status" value="1"/>
</dbReference>
<dbReference type="Gene3D" id="1.50.10.130">
    <property type="entry name" value="Terpene synthase, N-terminal domain"/>
    <property type="match status" value="1"/>
</dbReference>
<dbReference type="InterPro" id="IPR008949">
    <property type="entry name" value="Isoprenoid_synthase_dom_sf"/>
</dbReference>
<dbReference type="InterPro" id="IPR034741">
    <property type="entry name" value="Terpene_cyclase-like_1_C"/>
</dbReference>
<dbReference type="InterPro" id="IPR044814">
    <property type="entry name" value="Terpene_cyclase_plant_C1"/>
</dbReference>
<dbReference type="InterPro" id="IPR001906">
    <property type="entry name" value="Terpene_synth_N"/>
</dbReference>
<dbReference type="InterPro" id="IPR036965">
    <property type="entry name" value="Terpene_synth_N_sf"/>
</dbReference>
<dbReference type="InterPro" id="IPR050148">
    <property type="entry name" value="Terpene_synthase-like"/>
</dbReference>
<dbReference type="InterPro" id="IPR005630">
    <property type="entry name" value="Terpene_synthase_metal-bd"/>
</dbReference>
<dbReference type="InterPro" id="IPR008930">
    <property type="entry name" value="Terpenoid_cyclase/PrenylTrfase"/>
</dbReference>
<dbReference type="PANTHER" id="PTHR31739:SF25">
    <property type="entry name" value="(E,E)-GERANYLLINALOOL SYNTHASE"/>
    <property type="match status" value="1"/>
</dbReference>
<dbReference type="PANTHER" id="PTHR31739">
    <property type="entry name" value="ENT-COPALYL DIPHOSPHATE SYNTHASE, CHLOROPLASTIC"/>
    <property type="match status" value="1"/>
</dbReference>
<dbReference type="Pfam" id="PF01397">
    <property type="entry name" value="Terpene_synth"/>
    <property type="match status" value="1"/>
</dbReference>
<dbReference type="Pfam" id="PF03936">
    <property type="entry name" value="Terpene_synth_C"/>
    <property type="match status" value="1"/>
</dbReference>
<dbReference type="SFLD" id="SFLDS00005">
    <property type="entry name" value="Isoprenoid_Synthase_Type_I"/>
    <property type="match status" value="1"/>
</dbReference>
<dbReference type="SFLD" id="SFLDG01019">
    <property type="entry name" value="Terpene_Cyclase_Like_1_C_Termi"/>
    <property type="match status" value="1"/>
</dbReference>
<dbReference type="SFLD" id="SFLDG01014">
    <property type="entry name" value="Terpene_Cyclase_Like_1_N-term"/>
    <property type="match status" value="1"/>
</dbReference>
<dbReference type="SUPFAM" id="SSF48239">
    <property type="entry name" value="Terpenoid cyclases/Protein prenyltransferases"/>
    <property type="match status" value="1"/>
</dbReference>
<dbReference type="SUPFAM" id="SSF48576">
    <property type="entry name" value="Terpenoid synthases"/>
    <property type="match status" value="1"/>
</dbReference>
<organism>
    <name type="scientific">Pinus contorta</name>
    <name type="common">Shore pine</name>
    <name type="synonym">Lodgepole pine</name>
    <dbReference type="NCBI Taxonomy" id="3339"/>
    <lineage>
        <taxon>Eukaryota</taxon>
        <taxon>Viridiplantae</taxon>
        <taxon>Streptophyta</taxon>
        <taxon>Embryophyta</taxon>
        <taxon>Tracheophyta</taxon>
        <taxon>Spermatophyta</taxon>
        <taxon>Pinopsida</taxon>
        <taxon>Pinidae</taxon>
        <taxon>Conifers I</taxon>
        <taxon>Pinales</taxon>
        <taxon>Pinaceae</taxon>
        <taxon>Pinus</taxon>
        <taxon>Pinus subgen. Pinus</taxon>
    </lineage>
</organism>
<evidence type="ECO:0000250" key="1">
    <source>
        <dbReference type="UniProtKB" id="A0A1C9J6A7"/>
    </source>
</evidence>
<evidence type="ECO:0000250" key="2">
    <source>
        <dbReference type="UniProtKB" id="Q40577"/>
    </source>
</evidence>
<evidence type="ECO:0000255" key="3"/>
<evidence type="ECO:0000269" key="4">
    <source>
    </source>
</evidence>
<evidence type="ECO:0000303" key="5">
    <source>
    </source>
</evidence>
<evidence type="ECO:0000305" key="6"/>
<sequence length="624" mass="72021">MALVSVAPLVSMRRSLFSSPYELKSIDKTIPNLVMCRKRMLGRPSIRVSSTASVSNDDGVRRRVGDYRYNHWDEDLIDSLATSYEAPSYLKRADTLVEAIKDRFNSMGVDDGERMSPLTDLYQRLWMVDSVERLGIDRHFQNEIKSALDYVFRYFASSYWKEKGIGRGRQSAVTDLNSTALGLRTLRLHGYPVSSDVLENFKDHNGQFTCSGIQTEGEIRGVLNLFRASLIAFPGEKVMEEAEIFSTMYLKHALQKIAVSSLSQEIEYLLEYGWHTNPPRLEARMYMEVFPQDTIYEQKLVELAKVEFNIFHSLQKRELQSLTRWWKHYGFPQLSFTRHIHVEYYTFGSCIATDPKQSAFRLCFAKMSYFVTVLDDIYDTYGTMEELELFTAAIKRWDPSVVDCLPEYMKGVYMAVYDTVNEMAKEAEKVQGRDTLNYVRQAWELYIDAYMPEAKWISSGYLPTFQEYLDNSKISFGTRITILQPILTLGEPLPHEILQEIDFPAKFNDLISVILRLKGDTRCYKADRARGEEASSVSCYMKDNAGLTEEDAIHRINAMVHNLLKELNWELLKPDCNVPISCKKAAFDICRIFHHGYKYRDGYGDATIETKNLVKRTVLEPVPL</sequence>
<accession>R9QMW3</accession>
<name>BPHL2_PINCO</name>